<evidence type="ECO:0000255" key="1">
    <source>
        <dbReference type="HAMAP-Rule" id="MF_01609"/>
    </source>
</evidence>
<dbReference type="EC" id="6.3.2.2" evidence="1"/>
<dbReference type="EMBL" id="CP000266">
    <property type="protein sequence ID" value="ABF02780.1"/>
    <property type="molecule type" value="Genomic_DNA"/>
</dbReference>
<dbReference type="RefSeq" id="WP_001130611.1">
    <property type="nucleotide sequence ID" value="NC_008258.1"/>
</dbReference>
<dbReference type="SMR" id="Q0T746"/>
<dbReference type="KEGG" id="sfv:SFV_0521"/>
<dbReference type="HOGENOM" id="CLU_044848_1_1_6"/>
<dbReference type="Proteomes" id="UP000000659">
    <property type="component" value="Chromosome"/>
</dbReference>
<dbReference type="GO" id="GO:0005524">
    <property type="term" value="F:ATP binding"/>
    <property type="evidence" value="ECO:0007669"/>
    <property type="project" value="UniProtKB-KW"/>
</dbReference>
<dbReference type="GO" id="GO:0004357">
    <property type="term" value="F:glutamate-cysteine ligase activity"/>
    <property type="evidence" value="ECO:0007669"/>
    <property type="project" value="UniProtKB-EC"/>
</dbReference>
<dbReference type="GO" id="GO:0042398">
    <property type="term" value="P:modified amino acid biosynthetic process"/>
    <property type="evidence" value="ECO:0007669"/>
    <property type="project" value="InterPro"/>
</dbReference>
<dbReference type="FunFam" id="3.30.590.20:FF:000002">
    <property type="entry name" value="Putative glutamate--cysteine ligase 2"/>
    <property type="match status" value="1"/>
</dbReference>
<dbReference type="Gene3D" id="3.30.590.20">
    <property type="match status" value="1"/>
</dbReference>
<dbReference type="HAMAP" id="MF_01609">
    <property type="entry name" value="Glu_cys_ligase_2"/>
    <property type="match status" value="1"/>
</dbReference>
<dbReference type="InterPro" id="IPR050141">
    <property type="entry name" value="GCL_type2/YbdK_subfam"/>
</dbReference>
<dbReference type="InterPro" id="IPR006336">
    <property type="entry name" value="GCS2"/>
</dbReference>
<dbReference type="InterPro" id="IPR014746">
    <property type="entry name" value="Gln_synth/guanido_kin_cat_dom"/>
</dbReference>
<dbReference type="InterPro" id="IPR011793">
    <property type="entry name" value="YbdK"/>
</dbReference>
<dbReference type="NCBIfam" id="TIGR02050">
    <property type="entry name" value="gshA_cyan_rel"/>
    <property type="match status" value="1"/>
</dbReference>
<dbReference type="NCBIfam" id="NF010040">
    <property type="entry name" value="PRK13516.1"/>
    <property type="match status" value="1"/>
</dbReference>
<dbReference type="PANTHER" id="PTHR36510">
    <property type="entry name" value="GLUTAMATE--CYSTEINE LIGASE 2-RELATED"/>
    <property type="match status" value="1"/>
</dbReference>
<dbReference type="PANTHER" id="PTHR36510:SF1">
    <property type="entry name" value="GLUTAMATE--CYSTEINE LIGASE 2-RELATED"/>
    <property type="match status" value="1"/>
</dbReference>
<dbReference type="Pfam" id="PF04107">
    <property type="entry name" value="GCS2"/>
    <property type="match status" value="1"/>
</dbReference>
<dbReference type="SUPFAM" id="SSF55931">
    <property type="entry name" value="Glutamine synthetase/guanido kinase"/>
    <property type="match status" value="1"/>
</dbReference>
<comment type="function">
    <text evidence="1">ATP-dependent carboxylate-amine ligase which exhibits weak glutamate--cysteine ligase activity.</text>
</comment>
<comment type="catalytic activity">
    <reaction evidence="1">
        <text>L-cysteine + L-glutamate + ATP = gamma-L-glutamyl-L-cysteine + ADP + phosphate + H(+)</text>
        <dbReference type="Rhea" id="RHEA:13285"/>
        <dbReference type="ChEBI" id="CHEBI:15378"/>
        <dbReference type="ChEBI" id="CHEBI:29985"/>
        <dbReference type="ChEBI" id="CHEBI:30616"/>
        <dbReference type="ChEBI" id="CHEBI:35235"/>
        <dbReference type="ChEBI" id="CHEBI:43474"/>
        <dbReference type="ChEBI" id="CHEBI:58173"/>
        <dbReference type="ChEBI" id="CHEBI:456216"/>
        <dbReference type="EC" id="6.3.2.2"/>
    </reaction>
</comment>
<comment type="subunit">
    <text evidence="1">Homodimer.</text>
</comment>
<comment type="similarity">
    <text evidence="1">Belongs to the glutamate--cysteine ligase type 2 family. YbdK subfamily.</text>
</comment>
<reference key="1">
    <citation type="journal article" date="2006" name="BMC Genomics">
        <title>Complete genome sequence of Shigella flexneri 5b and comparison with Shigella flexneri 2a.</title>
        <authorList>
            <person name="Nie H."/>
            <person name="Yang F."/>
            <person name="Zhang X."/>
            <person name="Yang J."/>
            <person name="Chen L."/>
            <person name="Wang J."/>
            <person name="Xiong Z."/>
            <person name="Peng J."/>
            <person name="Sun L."/>
            <person name="Dong J."/>
            <person name="Xue Y."/>
            <person name="Xu X."/>
            <person name="Chen S."/>
            <person name="Yao Z."/>
            <person name="Shen Y."/>
            <person name="Jin Q."/>
        </authorList>
    </citation>
    <scope>NUCLEOTIDE SEQUENCE [LARGE SCALE GENOMIC DNA]</scope>
    <source>
        <strain>8401</strain>
    </source>
</reference>
<proteinExistence type="inferred from homology"/>
<gene>
    <name type="primary">ybdK</name>
    <name type="ordered locus">SFV_0521</name>
</gene>
<keyword id="KW-0067">ATP-binding</keyword>
<keyword id="KW-0436">Ligase</keyword>
<keyword id="KW-0547">Nucleotide-binding</keyword>
<accession>Q0T746</accession>
<sequence length="372" mass="41655">MPLPDFHVSEPFTLGIELEMQVVNPPGYDLNQDSSMLIDAVKNKITAGEVKHDITESMLELATDVCRDINQAAGQFSAMQKVVLQAAADHHLEICGGGTPPFQKWQRQEVCDNERYQRTLENFGYLIQQATVFGQHVHVGCASGDDAIYLLHGLSRFVPHFIALSAASPYMQGTDTRFAPSRPNIFSAFPDNGPMPWVSNWQQFEALFRCLSYTTMIDSIKDLHWDIRPSPHFGTVEVRVMDTPLTLSHAVNMAGLIQATAHWLLTERPFKHQEKDYLLYKFNRFQACRYGLEGVITDPHTGDRRPLTEDTLRLLEKIAPSAHKIGASSAIEALHRQVVSGLNEAQLMRDFVADGGSLIGLVKKHCEIWAGD</sequence>
<protein>
    <recommendedName>
        <fullName evidence="1">Putative glutamate--cysteine ligase 2</fullName>
        <ecNumber evidence="1">6.3.2.2</ecNumber>
    </recommendedName>
    <alternativeName>
        <fullName evidence="1">Gamma-glutamylcysteine synthetase 2</fullName>
        <shortName evidence="1">GCS 2</shortName>
        <shortName evidence="1">Gamma-GCS 2</shortName>
    </alternativeName>
</protein>
<organism>
    <name type="scientific">Shigella flexneri serotype 5b (strain 8401)</name>
    <dbReference type="NCBI Taxonomy" id="373384"/>
    <lineage>
        <taxon>Bacteria</taxon>
        <taxon>Pseudomonadati</taxon>
        <taxon>Pseudomonadota</taxon>
        <taxon>Gammaproteobacteria</taxon>
        <taxon>Enterobacterales</taxon>
        <taxon>Enterobacteriaceae</taxon>
        <taxon>Shigella</taxon>
    </lineage>
</organism>
<name>GCS2_SHIF8</name>
<feature type="chain" id="PRO_0000291516" description="Putative glutamate--cysteine ligase 2">
    <location>
        <begin position="1"/>
        <end position="372"/>
    </location>
</feature>